<comment type="alternative products">
    <event type="alternative splicing"/>
    <isoform>
        <id>Q7TPD2-1</id>
        <name>1</name>
        <sequence type="displayed"/>
    </isoform>
    <isoform>
        <id>Q7TPD2-2</id>
        <name>2</name>
        <sequence type="described" ref="VSP_031805 VSP_031806"/>
    </isoform>
</comment>
<proteinExistence type="evidence at transcript level"/>
<reference key="1">
    <citation type="journal article" date="2005" name="Science">
        <title>The transcriptional landscape of the mammalian genome.</title>
        <authorList>
            <person name="Carninci P."/>
            <person name="Kasukawa T."/>
            <person name="Katayama S."/>
            <person name="Gough J."/>
            <person name="Frith M.C."/>
            <person name="Maeda N."/>
            <person name="Oyama R."/>
            <person name="Ravasi T."/>
            <person name="Lenhard B."/>
            <person name="Wells C."/>
            <person name="Kodzius R."/>
            <person name="Shimokawa K."/>
            <person name="Bajic V.B."/>
            <person name="Brenner S.E."/>
            <person name="Batalov S."/>
            <person name="Forrest A.R."/>
            <person name="Zavolan M."/>
            <person name="Davis M.J."/>
            <person name="Wilming L.G."/>
            <person name="Aidinis V."/>
            <person name="Allen J.E."/>
            <person name="Ambesi-Impiombato A."/>
            <person name="Apweiler R."/>
            <person name="Aturaliya R.N."/>
            <person name="Bailey T.L."/>
            <person name="Bansal M."/>
            <person name="Baxter L."/>
            <person name="Beisel K.W."/>
            <person name="Bersano T."/>
            <person name="Bono H."/>
            <person name="Chalk A.M."/>
            <person name="Chiu K.P."/>
            <person name="Choudhary V."/>
            <person name="Christoffels A."/>
            <person name="Clutterbuck D.R."/>
            <person name="Crowe M.L."/>
            <person name="Dalla E."/>
            <person name="Dalrymple B.P."/>
            <person name="de Bono B."/>
            <person name="Della Gatta G."/>
            <person name="di Bernardo D."/>
            <person name="Down T."/>
            <person name="Engstrom P."/>
            <person name="Fagiolini M."/>
            <person name="Faulkner G."/>
            <person name="Fletcher C.F."/>
            <person name="Fukushima T."/>
            <person name="Furuno M."/>
            <person name="Futaki S."/>
            <person name="Gariboldi M."/>
            <person name="Georgii-Hemming P."/>
            <person name="Gingeras T.R."/>
            <person name="Gojobori T."/>
            <person name="Green R.E."/>
            <person name="Gustincich S."/>
            <person name="Harbers M."/>
            <person name="Hayashi Y."/>
            <person name="Hensch T.K."/>
            <person name="Hirokawa N."/>
            <person name="Hill D."/>
            <person name="Huminiecki L."/>
            <person name="Iacono M."/>
            <person name="Ikeo K."/>
            <person name="Iwama A."/>
            <person name="Ishikawa T."/>
            <person name="Jakt M."/>
            <person name="Kanapin A."/>
            <person name="Katoh M."/>
            <person name="Kawasawa Y."/>
            <person name="Kelso J."/>
            <person name="Kitamura H."/>
            <person name="Kitano H."/>
            <person name="Kollias G."/>
            <person name="Krishnan S.P."/>
            <person name="Kruger A."/>
            <person name="Kummerfeld S.K."/>
            <person name="Kurochkin I.V."/>
            <person name="Lareau L.F."/>
            <person name="Lazarevic D."/>
            <person name="Lipovich L."/>
            <person name="Liu J."/>
            <person name="Liuni S."/>
            <person name="McWilliam S."/>
            <person name="Madan Babu M."/>
            <person name="Madera M."/>
            <person name="Marchionni L."/>
            <person name="Matsuda H."/>
            <person name="Matsuzawa S."/>
            <person name="Miki H."/>
            <person name="Mignone F."/>
            <person name="Miyake S."/>
            <person name="Morris K."/>
            <person name="Mottagui-Tabar S."/>
            <person name="Mulder N."/>
            <person name="Nakano N."/>
            <person name="Nakauchi H."/>
            <person name="Ng P."/>
            <person name="Nilsson R."/>
            <person name="Nishiguchi S."/>
            <person name="Nishikawa S."/>
            <person name="Nori F."/>
            <person name="Ohara O."/>
            <person name="Okazaki Y."/>
            <person name="Orlando V."/>
            <person name="Pang K.C."/>
            <person name="Pavan W.J."/>
            <person name="Pavesi G."/>
            <person name="Pesole G."/>
            <person name="Petrovsky N."/>
            <person name="Piazza S."/>
            <person name="Reed J."/>
            <person name="Reid J.F."/>
            <person name="Ring B.Z."/>
            <person name="Ringwald M."/>
            <person name="Rost B."/>
            <person name="Ruan Y."/>
            <person name="Salzberg S.L."/>
            <person name="Sandelin A."/>
            <person name="Schneider C."/>
            <person name="Schoenbach C."/>
            <person name="Sekiguchi K."/>
            <person name="Semple C.A."/>
            <person name="Seno S."/>
            <person name="Sessa L."/>
            <person name="Sheng Y."/>
            <person name="Shibata Y."/>
            <person name="Shimada H."/>
            <person name="Shimada K."/>
            <person name="Silva D."/>
            <person name="Sinclair B."/>
            <person name="Sperling S."/>
            <person name="Stupka E."/>
            <person name="Sugiura K."/>
            <person name="Sultana R."/>
            <person name="Takenaka Y."/>
            <person name="Taki K."/>
            <person name="Tammoja K."/>
            <person name="Tan S.L."/>
            <person name="Tang S."/>
            <person name="Taylor M.S."/>
            <person name="Tegner J."/>
            <person name="Teichmann S.A."/>
            <person name="Ueda H.R."/>
            <person name="van Nimwegen E."/>
            <person name="Verardo R."/>
            <person name="Wei C.L."/>
            <person name="Yagi K."/>
            <person name="Yamanishi H."/>
            <person name="Zabarovsky E."/>
            <person name="Zhu S."/>
            <person name="Zimmer A."/>
            <person name="Hide W."/>
            <person name="Bult C."/>
            <person name="Grimmond S.M."/>
            <person name="Teasdale R.D."/>
            <person name="Liu E.T."/>
            <person name="Brusic V."/>
            <person name="Quackenbush J."/>
            <person name="Wahlestedt C."/>
            <person name="Mattick J.S."/>
            <person name="Hume D.A."/>
            <person name="Kai C."/>
            <person name="Sasaki D."/>
            <person name="Tomaru Y."/>
            <person name="Fukuda S."/>
            <person name="Kanamori-Katayama M."/>
            <person name="Suzuki M."/>
            <person name="Aoki J."/>
            <person name="Arakawa T."/>
            <person name="Iida J."/>
            <person name="Imamura K."/>
            <person name="Itoh M."/>
            <person name="Kato T."/>
            <person name="Kawaji H."/>
            <person name="Kawagashira N."/>
            <person name="Kawashima T."/>
            <person name="Kojima M."/>
            <person name="Kondo S."/>
            <person name="Konno H."/>
            <person name="Nakano K."/>
            <person name="Ninomiya N."/>
            <person name="Nishio T."/>
            <person name="Okada M."/>
            <person name="Plessy C."/>
            <person name="Shibata K."/>
            <person name="Shiraki T."/>
            <person name="Suzuki S."/>
            <person name="Tagami M."/>
            <person name="Waki K."/>
            <person name="Watahiki A."/>
            <person name="Okamura-Oho Y."/>
            <person name="Suzuki H."/>
            <person name="Kawai J."/>
            <person name="Hayashizaki Y."/>
        </authorList>
    </citation>
    <scope>NUCLEOTIDE SEQUENCE [LARGE SCALE MRNA] (ISOFORM 2)</scope>
    <source>
        <strain>C57BL/6J</strain>
        <tissue>Skin</tissue>
    </source>
</reference>
<reference key="2">
    <citation type="journal article" date="2004" name="Genome Res.">
        <title>The status, quality, and expansion of the NIH full-length cDNA project: the Mammalian Gene Collection (MGC).</title>
        <authorList>
            <consortium name="The MGC Project Team"/>
        </authorList>
    </citation>
    <scope>NUCLEOTIDE SEQUENCE [LARGE SCALE MRNA] (ISOFORM 1)</scope>
    <source>
        <strain>C57BL/6J</strain>
        <tissue>Brain</tissue>
    </source>
</reference>
<dbReference type="EMBL" id="AK076256">
    <property type="protein sequence ID" value="BAC36277.1"/>
    <property type="molecule type" value="mRNA"/>
</dbReference>
<dbReference type="EMBL" id="BC055342">
    <property type="protein sequence ID" value="AAH55342.1"/>
    <property type="molecule type" value="mRNA"/>
</dbReference>
<dbReference type="CCDS" id="CCDS39022.1">
    <molecule id="Q7TPD2-1"/>
</dbReference>
<dbReference type="RefSeq" id="NP_808537.2">
    <molecule id="Q7TPD2-1"/>
    <property type="nucleotide sequence ID" value="NM_177869.5"/>
</dbReference>
<dbReference type="BioGRID" id="236885">
    <property type="interactions" value="1"/>
</dbReference>
<dbReference type="FunCoup" id="Q7TPD2">
    <property type="interactions" value="726"/>
</dbReference>
<dbReference type="STRING" id="10090.ENSMUSP00000058333"/>
<dbReference type="PhosphoSitePlus" id="Q7TPD2"/>
<dbReference type="PaxDb" id="10090-ENSMUSP00000058333"/>
<dbReference type="PeptideAtlas" id="Q7TPD2"/>
<dbReference type="ProteomicsDB" id="275984">
    <molecule id="Q7TPD2-1"/>
</dbReference>
<dbReference type="ProteomicsDB" id="275985">
    <molecule id="Q7TPD2-2"/>
</dbReference>
<dbReference type="Pumba" id="Q7TPD2"/>
<dbReference type="Antibodypedia" id="31132">
    <property type="antibodies" value="40 antibodies from 16 providers"/>
</dbReference>
<dbReference type="DNASU" id="330050"/>
<dbReference type="Ensembl" id="ENSMUST00000056045.5">
    <molecule id="Q7TPD2-1"/>
    <property type="protein sequence ID" value="ENSMUSP00000058333.5"/>
    <property type="gene ID" value="ENSMUSG00000047221.6"/>
</dbReference>
<dbReference type="GeneID" id="330050"/>
<dbReference type="KEGG" id="mmu:330050"/>
<dbReference type="UCSC" id="uc008won.2">
    <molecule id="Q7TPD2-2"/>
    <property type="organism name" value="mouse"/>
</dbReference>
<dbReference type="UCSC" id="uc008woo.2">
    <molecule id="Q7TPD2-1"/>
    <property type="organism name" value="mouse"/>
</dbReference>
<dbReference type="AGR" id="MGI:2140983"/>
<dbReference type="CTD" id="222234"/>
<dbReference type="MGI" id="MGI:2140983">
    <property type="gene designation" value="Fam185a"/>
</dbReference>
<dbReference type="VEuPathDB" id="HostDB:ENSMUSG00000047221"/>
<dbReference type="eggNOG" id="ENOG502QQG7">
    <property type="taxonomic scope" value="Eukaryota"/>
</dbReference>
<dbReference type="GeneTree" id="ENSGT00390000016680"/>
<dbReference type="HOGENOM" id="CLU_072473_0_0_1"/>
<dbReference type="InParanoid" id="Q7TPD2"/>
<dbReference type="OMA" id="KTQSWFE"/>
<dbReference type="OrthoDB" id="5984441at2759"/>
<dbReference type="PhylomeDB" id="Q7TPD2"/>
<dbReference type="TreeFam" id="TF323809"/>
<dbReference type="BioGRID-ORCS" id="330050">
    <property type="hits" value="0 hits in 76 CRISPR screens"/>
</dbReference>
<dbReference type="PRO" id="PR:Q7TPD2"/>
<dbReference type="Proteomes" id="UP000000589">
    <property type="component" value="Chromosome 5"/>
</dbReference>
<dbReference type="RNAct" id="Q7TPD2">
    <property type="molecule type" value="protein"/>
</dbReference>
<dbReference type="Bgee" id="ENSMUSG00000047221">
    <property type="expression patterns" value="Expressed in animal zygote and 176 other cell types or tissues"/>
</dbReference>
<dbReference type="Gene3D" id="2.160.20.120">
    <property type="match status" value="1"/>
</dbReference>
<dbReference type="InterPro" id="IPR025164">
    <property type="entry name" value="Toastrack_DUF4097"/>
</dbReference>
<dbReference type="PANTHER" id="PTHR34094">
    <property type="match status" value="1"/>
</dbReference>
<dbReference type="PANTHER" id="PTHR34094:SF1">
    <property type="entry name" value="PROTEIN FAM185A"/>
    <property type="match status" value="1"/>
</dbReference>
<dbReference type="Pfam" id="PF13349">
    <property type="entry name" value="DUF4097"/>
    <property type="match status" value="1"/>
</dbReference>
<organism>
    <name type="scientific">Mus musculus</name>
    <name type="common">Mouse</name>
    <dbReference type="NCBI Taxonomy" id="10090"/>
    <lineage>
        <taxon>Eukaryota</taxon>
        <taxon>Metazoa</taxon>
        <taxon>Chordata</taxon>
        <taxon>Craniata</taxon>
        <taxon>Vertebrata</taxon>
        <taxon>Euteleostomi</taxon>
        <taxon>Mammalia</taxon>
        <taxon>Eutheria</taxon>
        <taxon>Euarchontoglires</taxon>
        <taxon>Glires</taxon>
        <taxon>Rodentia</taxon>
        <taxon>Myomorpha</taxon>
        <taxon>Muroidea</taxon>
        <taxon>Muridae</taxon>
        <taxon>Murinae</taxon>
        <taxon>Mus</taxon>
        <taxon>Mus</taxon>
    </lineage>
</organism>
<evidence type="ECO:0000303" key="1">
    <source>
    </source>
</evidence>
<evidence type="ECO:0000305" key="2"/>
<sequence>MFGRLPPCASRVRAGALVGALGARTCGSSGAQRQGSAPDDSGAGLARGALREWTLQVSPFGRLRARLPCHLAVRPLDPLAHPDGDRVQVAVCGVEHVARGLDSLQVKYDADRQEMAILSDDIDPQASVEVNAPVKFDLSIESSGSGSVKVQNIECDSCKIDTEQGTSILQSVKSQKLHVQTKGGDVICCGTVYGNIDIHASDKSTVSIEKLQGSCVNISTEDGLLQAKYLYTESSFLSSAAGNIALGNVHGNIILQSKMGNITVDSSCGCLKASSHQGAIDVYVSQLGEVALTTEEGSIAVKAPSSLRAYFKLSGKEVVVDEEAHVQEMAKDCKGDGVTVTGLMNQASKHERWINAIAPKGTVSFQHQSWFQSLKLPD</sequence>
<protein>
    <recommendedName>
        <fullName>Protein FAM185A</fullName>
    </recommendedName>
</protein>
<gene>
    <name type="primary">Fam185a</name>
</gene>
<name>F185A_MOUSE</name>
<keyword id="KW-0025">Alternative splicing</keyword>
<keyword id="KW-1185">Reference proteome</keyword>
<accession>Q7TPD2</accession>
<accession>Q8C6A4</accession>
<feature type="chain" id="PRO_0000321831" description="Protein FAM185A">
    <location>
        <begin position="1"/>
        <end position="378"/>
    </location>
</feature>
<feature type="splice variant" id="VSP_031805" description="In isoform 2." evidence="1">
    <original>TVSIEKL</original>
    <variation>VRLKCS</variation>
    <location>
        <begin position="205"/>
        <end position="211"/>
    </location>
</feature>
<feature type="splice variant" id="VSP_031806" description="In isoform 2." evidence="1">
    <location>
        <begin position="212"/>
        <end position="378"/>
    </location>
</feature>
<feature type="sequence conflict" description="In Ref. 1; BAC36277." evidence="2" ref="1">
    <original>S</original>
    <variation>W</variation>
    <location>
        <position position="127"/>
    </location>
</feature>